<evidence type="ECO:0000250" key="1"/>
<evidence type="ECO:0000255" key="2">
    <source>
        <dbReference type="PROSITE-ProRule" id="PRU00808"/>
    </source>
</evidence>
<feature type="chain" id="PRO_0000124138" description="Proteasome subunit alpha type-6">
    <location>
        <begin position="1"/>
        <end position="246"/>
    </location>
</feature>
<accession>O48551</accession>
<comment type="function">
    <text evidence="1">The proteasome is a multicatalytic proteinase complex which is characterized by its ability to cleave peptides with Arg, Phe, Tyr, Leu, and Glu adjacent to the leaving group at neutral or slightly basic pH. The proteasome has an ATP-dependent proteolytic activity (By similarity).</text>
</comment>
<comment type="subunit">
    <text evidence="1">The 26S proteasome consists of a 20S proteasome core and two 19S regulatory subunits. The 20S proteasome core is composed of 28 subunits that are arranged in four stacked rings, resulting in a barrel-shaped structure. The two end rings are each formed by seven alpha subunits, and the two central rings are each formed by seven beta subunits. The catalytic chamber with the active sites is on the inside of the barrel (By similarity).</text>
</comment>
<comment type="subcellular location">
    <subcellularLocation>
        <location evidence="1">Cytoplasm</location>
    </subcellularLocation>
    <subcellularLocation>
        <location evidence="1">Nucleus</location>
    </subcellularLocation>
</comment>
<comment type="similarity">
    <text evidence="2">Belongs to the peptidase T1A family.</text>
</comment>
<keyword id="KW-0963">Cytoplasm</keyword>
<keyword id="KW-0539">Nucleus</keyword>
<keyword id="KW-0647">Proteasome</keyword>
<keyword id="KW-1185">Reference proteome</keyword>
<protein>
    <recommendedName>
        <fullName>Proteasome subunit alpha type-6</fullName>
    </recommendedName>
    <alternativeName>
        <fullName>20S proteasome alpha subunit A</fullName>
    </alternativeName>
    <alternativeName>
        <fullName>20S proteasome subunit alpha-1</fullName>
    </alternativeName>
    <alternativeName>
        <fullName>Proteasome iota subunit</fullName>
    </alternativeName>
</protein>
<organism>
    <name type="scientific">Glycine max</name>
    <name type="common">Soybean</name>
    <name type="synonym">Glycine hispida</name>
    <dbReference type="NCBI Taxonomy" id="3847"/>
    <lineage>
        <taxon>Eukaryota</taxon>
        <taxon>Viridiplantae</taxon>
        <taxon>Streptophyta</taxon>
        <taxon>Embryophyta</taxon>
        <taxon>Tracheophyta</taxon>
        <taxon>Spermatophyta</taxon>
        <taxon>Magnoliopsida</taxon>
        <taxon>eudicotyledons</taxon>
        <taxon>Gunneridae</taxon>
        <taxon>Pentapetalae</taxon>
        <taxon>rosids</taxon>
        <taxon>fabids</taxon>
        <taxon>Fabales</taxon>
        <taxon>Fabaceae</taxon>
        <taxon>Papilionoideae</taxon>
        <taxon>50 kb inversion clade</taxon>
        <taxon>NPAAA clade</taxon>
        <taxon>indigoferoid/millettioid clade</taxon>
        <taxon>Phaseoleae</taxon>
        <taxon>Glycine</taxon>
        <taxon>Glycine subgen. Soja</taxon>
    </lineage>
</organism>
<sequence>MSRGSGGGYNRHITIFSPEGRLFQVEYAFKAVKAAGITSIGVRGKDSICVVTHKKVPDKLLDNTSVTHLFPITKYLGLLATGMTADARTLVQQARNEAAEFRFTYGYEMPVDVLAKWIADKSQVYTQHAYMRPLGVVAMVLGIDDEYGPQLYKCDPAGHYFGHKATSAGLKDQEAINFLEKKMKNDPSFTYEETVQTAISALQSVLQEDFKATEIEVGVVRKDNPEFRVLTTDEIDEHLTAISERD</sequence>
<name>PSA6_SOYBN</name>
<reference key="1">
    <citation type="submission" date="1998-08" db="EMBL/GenBank/DDBJ databases">
        <title>Characterization of proteasomal iota subunit gene of soybean, Glycine max (L.) Merr.</title>
        <authorList>
            <person name="Tang Y."/>
            <person name="Skorupska H.T."/>
            <person name="Abbott A.G."/>
        </authorList>
    </citation>
    <scope>NUCLEOTIDE SEQUENCE [MRNA]</scope>
</reference>
<proteinExistence type="evidence at transcript level"/>
<dbReference type="EMBL" id="AF034572">
    <property type="protein sequence ID" value="AAC28135.1"/>
    <property type="molecule type" value="mRNA"/>
</dbReference>
<dbReference type="PIR" id="T06142">
    <property type="entry name" value="T06142"/>
</dbReference>
<dbReference type="SMR" id="O48551"/>
<dbReference type="FunCoup" id="O48551">
    <property type="interactions" value="7261"/>
</dbReference>
<dbReference type="STRING" id="3847.O48551"/>
<dbReference type="MEROPS" id="T01.971"/>
<dbReference type="PaxDb" id="3847-GLYMA12G22340.1"/>
<dbReference type="ProMEX" id="O48551"/>
<dbReference type="eggNOG" id="KOG0182">
    <property type="taxonomic scope" value="Eukaryota"/>
</dbReference>
<dbReference type="HOGENOM" id="CLU_035750_4_1_1"/>
<dbReference type="InParanoid" id="O48551"/>
<dbReference type="Proteomes" id="UP000008827">
    <property type="component" value="Unplaced"/>
</dbReference>
<dbReference type="GO" id="GO:0005737">
    <property type="term" value="C:cytoplasm"/>
    <property type="evidence" value="ECO:0007669"/>
    <property type="project" value="UniProtKB-SubCell"/>
</dbReference>
<dbReference type="GO" id="GO:0005634">
    <property type="term" value="C:nucleus"/>
    <property type="evidence" value="ECO:0000318"/>
    <property type="project" value="GO_Central"/>
</dbReference>
<dbReference type="GO" id="GO:0019773">
    <property type="term" value="C:proteasome core complex, alpha-subunit complex"/>
    <property type="evidence" value="ECO:0000250"/>
    <property type="project" value="UniProtKB"/>
</dbReference>
<dbReference type="GO" id="GO:0043161">
    <property type="term" value="P:proteasome-mediated ubiquitin-dependent protein catabolic process"/>
    <property type="evidence" value="ECO:0000318"/>
    <property type="project" value="GO_Central"/>
</dbReference>
<dbReference type="CDD" id="cd03754">
    <property type="entry name" value="proteasome_alpha_type_6"/>
    <property type="match status" value="1"/>
</dbReference>
<dbReference type="FunFam" id="3.60.20.10:FF:000036">
    <property type="entry name" value="Proteasome subunit alpha type"/>
    <property type="match status" value="1"/>
</dbReference>
<dbReference type="Gene3D" id="3.60.20.10">
    <property type="entry name" value="Glutamine Phosphoribosylpyrophosphate, subunit 1, domain 1"/>
    <property type="match status" value="1"/>
</dbReference>
<dbReference type="InterPro" id="IPR029055">
    <property type="entry name" value="Ntn_hydrolases_N"/>
</dbReference>
<dbReference type="InterPro" id="IPR050115">
    <property type="entry name" value="Proteasome_alpha"/>
</dbReference>
<dbReference type="InterPro" id="IPR023332">
    <property type="entry name" value="Proteasome_alpha-type"/>
</dbReference>
<dbReference type="InterPro" id="IPR000426">
    <property type="entry name" value="Proteasome_asu_N"/>
</dbReference>
<dbReference type="InterPro" id="IPR001353">
    <property type="entry name" value="Proteasome_sua/b"/>
</dbReference>
<dbReference type="InterPro" id="IPR034642">
    <property type="entry name" value="Proteasome_subunit_alpha6"/>
</dbReference>
<dbReference type="NCBIfam" id="NF003075">
    <property type="entry name" value="PRK03996.1"/>
    <property type="match status" value="1"/>
</dbReference>
<dbReference type="PANTHER" id="PTHR11599">
    <property type="entry name" value="PROTEASOME SUBUNIT ALPHA/BETA"/>
    <property type="match status" value="1"/>
</dbReference>
<dbReference type="Pfam" id="PF00227">
    <property type="entry name" value="Proteasome"/>
    <property type="match status" value="1"/>
</dbReference>
<dbReference type="Pfam" id="PF10584">
    <property type="entry name" value="Proteasome_A_N"/>
    <property type="match status" value="1"/>
</dbReference>
<dbReference type="SMART" id="SM00948">
    <property type="entry name" value="Proteasome_A_N"/>
    <property type="match status" value="1"/>
</dbReference>
<dbReference type="SUPFAM" id="SSF56235">
    <property type="entry name" value="N-terminal nucleophile aminohydrolases (Ntn hydrolases)"/>
    <property type="match status" value="1"/>
</dbReference>
<dbReference type="PROSITE" id="PS00388">
    <property type="entry name" value="PROTEASOME_ALPHA_1"/>
    <property type="match status" value="1"/>
</dbReference>
<dbReference type="PROSITE" id="PS51475">
    <property type="entry name" value="PROTEASOME_ALPHA_2"/>
    <property type="match status" value="1"/>
</dbReference>
<gene>
    <name type="primary">PAA1</name>
</gene>